<comment type="function">
    <text evidence="5 6 7 9 10 11">Involved in de novo DNA methylation. Controls asymmetric and CpNpG methylation. Required for FWA gene silencing but not for the maintenance of SUP gene silencing. Functionally redundant to CMT3 to maintain non-CpG methylation. Involved in RNA-directed DNA methylation (RdDM) (PubMed:12121623, PubMed:12151602, PubMed:14680640). Acts as major DNA methyltransferase in the RdDM pathway, and is essential for RNA-directed de novo DNA methylation of cytosines in all sequence contexts (PubMed:21060858, PubMed:21212233). Associates with long non-coding RNA (lncRNA) produced by RNA polymerase V (Pol V). This association is dependent on AGO4 and IDN2, and results in DNA methylation of RdDM target loci (PubMed:24862207).</text>
</comment>
<comment type="catalytic activity">
    <reaction evidence="2">
        <text>a 2'-deoxycytidine in DNA + S-adenosyl-L-methionine = a 5-methyl-2'-deoxycytidine in DNA + S-adenosyl-L-homocysteine + H(+)</text>
        <dbReference type="Rhea" id="RHEA:13681"/>
        <dbReference type="Rhea" id="RHEA-COMP:11369"/>
        <dbReference type="Rhea" id="RHEA-COMP:11370"/>
        <dbReference type="ChEBI" id="CHEBI:15378"/>
        <dbReference type="ChEBI" id="CHEBI:57856"/>
        <dbReference type="ChEBI" id="CHEBI:59789"/>
        <dbReference type="ChEBI" id="CHEBI:85452"/>
        <dbReference type="ChEBI" id="CHEBI:85454"/>
        <dbReference type="EC" id="2.1.1.37"/>
    </reaction>
</comment>
<comment type="subunit">
    <text evidence="8">Interacts with RDM1.</text>
</comment>
<comment type="interaction">
    <interactant intactId="EBI-6923904">
        <id>Q9M548</id>
    </interactant>
    <interactant intactId="EBI-2352199">
        <id>Q9ZVD5</id>
        <label>AGO4</label>
    </interactant>
    <organismsDiffer>false</organismsDiffer>
    <experiments>2</experiments>
</comment>
<comment type="interaction">
    <interactant intactId="EBI-6923904">
        <id>Q9M548</id>
    </interactant>
    <interactant intactId="EBI-15850569">
        <id>Q9LUJ3</id>
        <label>RDM1</label>
    </interactant>
    <organismsDiffer>false</organismsDiffer>
    <experiments>2</experiments>
</comment>
<comment type="subcellular location">
    <subcellularLocation>
        <location evidence="8">Nucleus</location>
        <location evidence="8">Nucleoplasm</location>
    </subcellularLocation>
    <text>Peri-nucleolar.</text>
</comment>
<comment type="tissue specificity">
    <text evidence="4">Expressed in roots, inflorescences and at lower levels in leaves.</text>
</comment>
<comment type="miscellaneous">
    <text>DRM2 is expressed at much higher levels than DRM1, which is scarcely detected, suggesting that DRM2 is the predominant de novo methylase.</text>
</comment>
<comment type="similarity">
    <text evidence="2">Belongs to the class I-like SAM-binding methyltransferase superfamily. DRM-methyltransferase family.</text>
</comment>
<comment type="sequence caution" evidence="12">
    <conflict type="erroneous gene model prediction">
        <sequence resource="EMBL-CDS" id="CAB87629"/>
    </conflict>
    <text>Was originally thought to correspond to two different genes At5g14620 and At5g14630.</text>
</comment>
<comment type="sequence caution" evidence="12">
    <conflict type="erroneous gene model prediction">
        <sequence resource="EMBL-CDS" id="CAB87630"/>
    </conflict>
    <text>Was originally thought to correspond to two different genes At5g14620 and At5g14630.</text>
</comment>
<organism>
    <name type="scientific">Arabidopsis thaliana</name>
    <name type="common">Mouse-ear cress</name>
    <dbReference type="NCBI Taxonomy" id="3702"/>
    <lineage>
        <taxon>Eukaryota</taxon>
        <taxon>Viridiplantae</taxon>
        <taxon>Streptophyta</taxon>
        <taxon>Embryophyta</taxon>
        <taxon>Tracheophyta</taxon>
        <taxon>Spermatophyta</taxon>
        <taxon>Magnoliopsida</taxon>
        <taxon>eudicotyledons</taxon>
        <taxon>Gunneridae</taxon>
        <taxon>Pentapetalae</taxon>
        <taxon>rosids</taxon>
        <taxon>malvids</taxon>
        <taxon>Brassicales</taxon>
        <taxon>Brassicaceae</taxon>
        <taxon>Camelineae</taxon>
        <taxon>Arabidopsis</taxon>
    </lineage>
</organism>
<sequence>MVIWNNDDDDFLEIDNFQSSPRSSPIHAMQCRVENLAGVAVTTSSLSSPTETTDLVQMGFSDEVFATLFDMGFPVEMISRAIKETGPNVETSVIIDTISKYSSDCEAGSSKSKAIDHFLAMGFDEEKVVKAIQEHGEDNMEAIANALLSCPEAKKLPAAVEEEDGIDWSSSDDDTNYTDMLNSDDEKDPNSNENGSKIRSLVKMGFSELEASLAVERCGENVDIAELTDFLCAAQMAREFSEFYTEHEEQKPRHNIKKRRFESKGEPRSSVDDEPIRLPNPMIGFGVPNEPGLITHRSLPELARGPPFFYYENVALTPKGVWETISRHLFEIPPEFVDSKYFCVAARKRGYIHNLPINNRFQIQPPPKYTIHDAFPLSKRWWPEWDKRTKLNCILTCTGSAQLTNRIRVALEPYNEEPEPPKHVQRYVIDQCKKWNLVWVGKNKAAPLEPDEMESILGFPKNHTRGGGMSRTERFKSLGNSFQVDTVAYHLSVLKPIFPHGINVLSLFTGIGGGEVALHRLQIKMKLVVSVEISKVNRNILKDFWEQTNQTGELIEFSDIQHLTNDTIEGLMEKYGGFDLVIGGSPCNNLAGGNRVSRVGLEGDQSSLFFEYCRILEVVRARMRGS</sequence>
<feature type="chain" id="PRO_0000381942" description="DNA (cytosine-5)-methyltransferase DRM2">
    <location>
        <begin position="1"/>
        <end position="626"/>
    </location>
</feature>
<feature type="domain" description="UBA 1" evidence="1">
    <location>
        <begin position="59"/>
        <end position="101"/>
    </location>
</feature>
<feature type="domain" description="UBA 2" evidence="1">
    <location>
        <begin position="109"/>
        <end position="150"/>
    </location>
</feature>
<feature type="domain" description="UBA 3" evidence="1">
    <location>
        <begin position="190"/>
        <end position="232"/>
    </location>
</feature>
<feature type="domain" description="SAM-dependent MTase DRM-type" evidence="2">
    <location>
        <begin position="295"/>
        <end position="626"/>
    </location>
</feature>
<feature type="region of interest" description="Disordered" evidence="3">
    <location>
        <begin position="160"/>
        <end position="196"/>
    </location>
</feature>
<feature type="region of interest" description="Disordered" evidence="3">
    <location>
        <begin position="245"/>
        <end position="282"/>
    </location>
</feature>
<feature type="compositionally biased region" description="Acidic residues" evidence="3">
    <location>
        <begin position="160"/>
        <end position="187"/>
    </location>
</feature>
<feature type="compositionally biased region" description="Basic and acidic residues" evidence="3">
    <location>
        <begin position="262"/>
        <end position="276"/>
    </location>
</feature>
<feature type="mutagenesis site" description="Loss of function in maintaining non-CpG methylation." evidence="9">
    <original>S</original>
    <variation>A</variation>
    <location>
        <position position="585"/>
    </location>
</feature>
<feature type="mutagenesis site" description="Loss of function in maintaining non-CpG methylation." evidence="9">
    <original>C</original>
    <variation>A</variation>
    <location>
        <position position="587"/>
    </location>
</feature>
<feature type="helix" evidence="13">
    <location>
        <begin position="301"/>
        <end position="303"/>
    </location>
</feature>
<feature type="strand" evidence="13">
    <location>
        <begin position="306"/>
        <end position="315"/>
    </location>
</feature>
<feature type="helix" evidence="13">
    <location>
        <begin position="321"/>
        <end position="328"/>
    </location>
</feature>
<feature type="turn" evidence="13">
    <location>
        <begin position="329"/>
        <end position="331"/>
    </location>
</feature>
<feature type="strand" evidence="13">
    <location>
        <begin position="335"/>
        <end position="338"/>
    </location>
</feature>
<feature type="helix" evidence="13">
    <location>
        <begin position="339"/>
        <end position="341"/>
    </location>
</feature>
<feature type="strand" evidence="13">
    <location>
        <begin position="343"/>
        <end position="345"/>
    </location>
</feature>
<feature type="strand" evidence="13">
    <location>
        <begin position="348"/>
        <end position="353"/>
    </location>
</feature>
<feature type="helix" evidence="13">
    <location>
        <begin position="371"/>
        <end position="374"/>
    </location>
</feature>
<feature type="helix" evidence="13">
    <location>
        <begin position="376"/>
        <end position="380"/>
    </location>
</feature>
<feature type="strand" evidence="13">
    <location>
        <begin position="389"/>
        <end position="391"/>
    </location>
</feature>
<feature type="helix" evidence="13">
    <location>
        <begin position="401"/>
        <end position="411"/>
    </location>
</feature>
<feature type="helix" evidence="13">
    <location>
        <begin position="412"/>
        <end position="414"/>
    </location>
</feature>
<feature type="strand" evidence="13">
    <location>
        <begin position="415"/>
        <end position="419"/>
    </location>
</feature>
<feature type="helix" evidence="13">
    <location>
        <begin position="422"/>
        <end position="434"/>
    </location>
</feature>
<feature type="strand" evidence="13">
    <location>
        <begin position="438"/>
        <end position="441"/>
    </location>
</feature>
<feature type="strand" evidence="13">
    <location>
        <begin position="444"/>
        <end position="446"/>
    </location>
</feature>
<feature type="helix" evidence="13">
    <location>
        <begin position="450"/>
        <end position="456"/>
    </location>
</feature>
<feature type="turn" evidence="13">
    <location>
        <begin position="461"/>
        <end position="464"/>
    </location>
</feature>
<feature type="helix" evidence="13">
    <location>
        <begin position="471"/>
        <end position="480"/>
    </location>
</feature>
<feature type="helix" evidence="13">
    <location>
        <begin position="484"/>
        <end position="491"/>
    </location>
</feature>
<feature type="helix" evidence="13">
    <location>
        <begin position="494"/>
        <end position="497"/>
    </location>
</feature>
<feature type="strand" evidence="13">
    <location>
        <begin position="502"/>
        <end position="508"/>
    </location>
</feature>
<feature type="turn" evidence="13">
    <location>
        <begin position="510"/>
        <end position="512"/>
    </location>
</feature>
<feature type="helix" evidence="13">
    <location>
        <begin position="513"/>
        <end position="520"/>
    </location>
</feature>
<feature type="strand" evidence="13">
    <location>
        <begin position="525"/>
        <end position="531"/>
    </location>
</feature>
<feature type="helix" evidence="13">
    <location>
        <begin position="535"/>
        <end position="547"/>
    </location>
</feature>
<feature type="strand" evidence="13">
    <location>
        <begin position="552"/>
        <end position="557"/>
    </location>
</feature>
<feature type="helix" evidence="13">
    <location>
        <begin position="560"/>
        <end position="562"/>
    </location>
</feature>
<feature type="helix" evidence="13">
    <location>
        <begin position="565"/>
        <end position="575"/>
    </location>
</feature>
<feature type="strand" evidence="13">
    <location>
        <begin position="579"/>
        <end position="584"/>
    </location>
</feature>
<feature type="turn" evidence="13">
    <location>
        <begin position="588"/>
        <end position="590"/>
    </location>
</feature>
<feature type="helix" evidence="14">
    <location>
        <begin position="600"/>
        <end position="602"/>
    </location>
</feature>
<feature type="helix" evidence="13">
    <location>
        <begin position="606"/>
        <end position="608"/>
    </location>
</feature>
<feature type="helix" evidence="13">
    <location>
        <begin position="609"/>
        <end position="623"/>
    </location>
</feature>
<gene>
    <name type="primary">DRM2</name>
    <name type="ordered locus">At5g14620/At5g14630</name>
    <name type="ORF">T15N1.110/T15N1.120</name>
</gene>
<evidence type="ECO:0000255" key="1">
    <source>
        <dbReference type="PROSITE-ProRule" id="PRU00212"/>
    </source>
</evidence>
<evidence type="ECO:0000255" key="2">
    <source>
        <dbReference type="PROSITE-ProRule" id="PRU01017"/>
    </source>
</evidence>
<evidence type="ECO:0000256" key="3">
    <source>
        <dbReference type="SAM" id="MobiDB-lite"/>
    </source>
</evidence>
<evidence type="ECO:0000269" key="4">
    <source>
    </source>
</evidence>
<evidence type="ECO:0000269" key="5">
    <source>
    </source>
</evidence>
<evidence type="ECO:0000269" key="6">
    <source>
    </source>
</evidence>
<evidence type="ECO:0000269" key="7">
    <source>
    </source>
</evidence>
<evidence type="ECO:0000269" key="8">
    <source>
    </source>
</evidence>
<evidence type="ECO:0000269" key="9">
    <source>
    </source>
</evidence>
<evidence type="ECO:0000269" key="10">
    <source>
    </source>
</evidence>
<evidence type="ECO:0000269" key="11">
    <source>
    </source>
</evidence>
<evidence type="ECO:0000305" key="12"/>
<evidence type="ECO:0007829" key="13">
    <source>
        <dbReference type="PDB" id="7L4C"/>
    </source>
</evidence>
<evidence type="ECO:0007829" key="14">
    <source>
        <dbReference type="PDB" id="7L4F"/>
    </source>
</evidence>
<keyword id="KW-0002">3D-structure</keyword>
<keyword id="KW-0238">DNA-binding</keyword>
<keyword id="KW-0489">Methyltransferase</keyword>
<keyword id="KW-0539">Nucleus</keyword>
<keyword id="KW-1185">Reference proteome</keyword>
<keyword id="KW-0677">Repeat</keyword>
<keyword id="KW-0949">S-adenosyl-L-methionine</keyword>
<keyword id="KW-0808">Transferase</keyword>
<name>DRM2_ARATH</name>
<protein>
    <recommendedName>
        <fullName>DNA (cytosine-5)-methyltransferase DRM2</fullName>
        <ecNumber>2.1.1.37</ecNumber>
    </recommendedName>
    <alternativeName>
        <fullName>Protein DOMAINS REARRANGED METHYLASE 2</fullName>
    </alternativeName>
</protein>
<proteinExistence type="evidence at protein level"/>
<reference key="1">
    <citation type="journal article" date="2000" name="Proc. Natl. Acad. Sci. U.S.A.">
        <title>Conserved plant genes with similarity to mammalian de novo DNA methyltransferases.</title>
        <authorList>
            <person name="Cao X."/>
            <person name="Springer N.M."/>
            <person name="Muszynski M.G."/>
            <person name="Phillips R.L."/>
            <person name="Kaeppler S."/>
            <person name="Jacobsen S.E."/>
        </authorList>
    </citation>
    <scope>NUCLEOTIDE SEQUENCE [MRNA]</scope>
    <scope>TISSUE SPECIFICITY</scope>
    <source>
        <strain>cv. Columbia</strain>
    </source>
</reference>
<reference key="2">
    <citation type="journal article" date="2000" name="Nature">
        <title>Sequence and analysis of chromosome 5 of the plant Arabidopsis thaliana.</title>
        <authorList>
            <person name="Tabata S."/>
            <person name="Kaneko T."/>
            <person name="Nakamura Y."/>
            <person name="Kotani H."/>
            <person name="Kato T."/>
            <person name="Asamizu E."/>
            <person name="Miyajima N."/>
            <person name="Sasamoto S."/>
            <person name="Kimura T."/>
            <person name="Hosouchi T."/>
            <person name="Kawashima K."/>
            <person name="Kohara M."/>
            <person name="Matsumoto M."/>
            <person name="Matsuno A."/>
            <person name="Muraki A."/>
            <person name="Nakayama S."/>
            <person name="Nakazaki N."/>
            <person name="Naruo K."/>
            <person name="Okumura S."/>
            <person name="Shinpo S."/>
            <person name="Takeuchi C."/>
            <person name="Wada T."/>
            <person name="Watanabe A."/>
            <person name="Yamada M."/>
            <person name="Yasuda M."/>
            <person name="Sato S."/>
            <person name="de la Bastide M."/>
            <person name="Huang E."/>
            <person name="Spiegel L."/>
            <person name="Gnoj L."/>
            <person name="O'Shaughnessy A."/>
            <person name="Preston R."/>
            <person name="Habermann K."/>
            <person name="Murray J."/>
            <person name="Johnson D."/>
            <person name="Rohlfing T."/>
            <person name="Nelson J."/>
            <person name="Stoneking T."/>
            <person name="Pepin K."/>
            <person name="Spieth J."/>
            <person name="Sekhon M."/>
            <person name="Armstrong J."/>
            <person name="Becker M."/>
            <person name="Belter E."/>
            <person name="Cordum H."/>
            <person name="Cordes M."/>
            <person name="Courtney L."/>
            <person name="Courtney W."/>
            <person name="Dante M."/>
            <person name="Du H."/>
            <person name="Edwards J."/>
            <person name="Fryman J."/>
            <person name="Haakensen B."/>
            <person name="Lamar E."/>
            <person name="Latreille P."/>
            <person name="Leonard S."/>
            <person name="Meyer R."/>
            <person name="Mulvaney E."/>
            <person name="Ozersky P."/>
            <person name="Riley A."/>
            <person name="Strowmatt C."/>
            <person name="Wagner-McPherson C."/>
            <person name="Wollam A."/>
            <person name="Yoakum M."/>
            <person name="Bell M."/>
            <person name="Dedhia N."/>
            <person name="Parnell L."/>
            <person name="Shah R."/>
            <person name="Rodriguez M."/>
            <person name="Hoon See L."/>
            <person name="Vil D."/>
            <person name="Baker J."/>
            <person name="Kirchoff K."/>
            <person name="Toth K."/>
            <person name="King L."/>
            <person name="Bahret A."/>
            <person name="Miller B."/>
            <person name="Marra M.A."/>
            <person name="Martienssen R."/>
            <person name="McCombie W.R."/>
            <person name="Wilson R.K."/>
            <person name="Murphy G."/>
            <person name="Bancroft I."/>
            <person name="Volckaert G."/>
            <person name="Wambutt R."/>
            <person name="Duesterhoeft A."/>
            <person name="Stiekema W."/>
            <person name="Pohl T."/>
            <person name="Entian K.-D."/>
            <person name="Terryn N."/>
            <person name="Hartley N."/>
            <person name="Bent E."/>
            <person name="Johnson S."/>
            <person name="Langham S.-A."/>
            <person name="McCullagh B."/>
            <person name="Robben J."/>
            <person name="Grymonprez B."/>
            <person name="Zimmermann W."/>
            <person name="Ramsperger U."/>
            <person name="Wedler H."/>
            <person name="Balke K."/>
            <person name="Wedler E."/>
            <person name="Peters S."/>
            <person name="van Staveren M."/>
            <person name="Dirkse W."/>
            <person name="Mooijman P."/>
            <person name="Klein Lankhorst R."/>
            <person name="Weitzenegger T."/>
            <person name="Bothe G."/>
            <person name="Rose M."/>
            <person name="Hauf J."/>
            <person name="Berneiser S."/>
            <person name="Hempel S."/>
            <person name="Feldpausch M."/>
            <person name="Lamberth S."/>
            <person name="Villarroel R."/>
            <person name="Gielen J."/>
            <person name="Ardiles W."/>
            <person name="Bents O."/>
            <person name="Lemcke K."/>
            <person name="Kolesov G."/>
            <person name="Mayer K.F.X."/>
            <person name="Rudd S."/>
            <person name="Schoof H."/>
            <person name="Schueller C."/>
            <person name="Zaccaria P."/>
            <person name="Mewes H.-W."/>
            <person name="Bevan M."/>
            <person name="Fransz P.F."/>
        </authorList>
    </citation>
    <scope>NUCLEOTIDE SEQUENCE [LARGE SCALE GENOMIC DNA]</scope>
    <source>
        <strain>cv. Columbia</strain>
    </source>
</reference>
<reference key="3">
    <citation type="journal article" date="2017" name="Plant J.">
        <title>Araport11: a complete reannotation of the Arabidopsis thaliana reference genome.</title>
        <authorList>
            <person name="Cheng C.Y."/>
            <person name="Krishnakumar V."/>
            <person name="Chan A.P."/>
            <person name="Thibaud-Nissen F."/>
            <person name="Schobel S."/>
            <person name="Town C.D."/>
        </authorList>
    </citation>
    <scope>GENOME REANNOTATION</scope>
    <source>
        <strain>cv. Columbia</strain>
    </source>
</reference>
<reference key="4">
    <citation type="submission" date="2006-07" db="EMBL/GenBank/DDBJ databases">
        <title>Large-scale analysis of RIKEN Arabidopsis full-length (RAFL) cDNAs.</title>
        <authorList>
            <person name="Totoki Y."/>
            <person name="Seki M."/>
            <person name="Ishida J."/>
            <person name="Nakajima M."/>
            <person name="Enju A."/>
            <person name="Kamiya A."/>
            <person name="Narusaka M."/>
            <person name="Shin-i T."/>
            <person name="Nakagawa M."/>
            <person name="Sakamoto N."/>
            <person name="Oishi K."/>
            <person name="Kohara Y."/>
            <person name="Kobayashi M."/>
            <person name="Toyoda A."/>
            <person name="Sakaki Y."/>
            <person name="Sakurai T."/>
            <person name="Iida K."/>
            <person name="Akiyama K."/>
            <person name="Satou M."/>
            <person name="Toyoda T."/>
            <person name="Konagaya A."/>
            <person name="Carninci P."/>
            <person name="Kawai J."/>
            <person name="Hayashizaki Y."/>
            <person name="Shinozaki K."/>
        </authorList>
    </citation>
    <scope>NUCLEOTIDE SEQUENCE [LARGE SCALE MRNA]</scope>
    <source>
        <strain>cv. Columbia</strain>
    </source>
</reference>
<reference key="5">
    <citation type="journal article" date="2002" name="Proc. Natl. Acad. Sci. U.S.A.">
        <title>Locus-specific control of asymmetric and CpNpG methylation by the DRM and CMT3 methyltransferase genes.</title>
        <authorList>
            <person name="Cao X."/>
            <person name="Jacobsen S.E."/>
        </authorList>
    </citation>
    <scope>FUNCTION</scope>
</reference>
<reference key="6">
    <citation type="journal article" date="2002" name="Curr. Biol.">
        <title>Role of the arabidopsis DRM methyltransferases in de novo DNA methylation and gene silencing.</title>
        <authorList>
            <person name="Cao X."/>
            <person name="Jacobsen S.E."/>
        </authorList>
    </citation>
    <scope>FUNCTION</scope>
</reference>
<reference key="7">
    <citation type="journal article" date="2003" name="Curr. Biol.">
        <title>Role of the DRM and CMT3 methyltransferases in RNA-directed DNA methylation.</title>
        <authorList>
            <person name="Cao X."/>
            <person name="Aufsatz W."/>
            <person name="Zilberman D."/>
            <person name="Mette M.F."/>
            <person name="Huang M.S."/>
            <person name="Matzke M."/>
            <person name="Jacobsen S.E."/>
        </authorList>
    </citation>
    <scope>FUNCTION</scope>
</reference>
<reference key="8">
    <citation type="journal article" date="2010" name="Nature">
        <title>An RNA polymerase II- and AGO4-associated protein acts in RNA-directed DNA methylation.</title>
        <authorList>
            <person name="Gao Z."/>
            <person name="Liu H.L."/>
            <person name="Daxinger L."/>
            <person name="Pontes O."/>
            <person name="He X."/>
            <person name="Qian W."/>
            <person name="Lin H."/>
            <person name="Xie M."/>
            <person name="Lorkovic Z.J."/>
            <person name="Zhang S."/>
            <person name="Miki D."/>
            <person name="Zhan X."/>
            <person name="Pontier D."/>
            <person name="Lagrange T."/>
            <person name="Jin H."/>
            <person name="Matzke A.J."/>
            <person name="Matzke M."/>
            <person name="Pikaard C.S."/>
            <person name="Zhu J.K."/>
        </authorList>
    </citation>
    <scope>INTERACTION WITH RDM1</scope>
    <scope>SUBCELLULAR LOCATION</scope>
</reference>
<reference key="9">
    <citation type="journal article" date="2010" name="PLoS Genet.">
        <title>The de novo cytosine methyltransferase DRM2 requires intact UBA domains and a catalytically mutated paralog DRM3 during RNA-directed DNA methylation in Arabidopsis thaliana.</title>
        <authorList>
            <person name="Henderson I.R."/>
            <person name="Deleris A."/>
            <person name="Wong W."/>
            <person name="Zhong X."/>
            <person name="Chin H.G."/>
            <person name="Horwitz G.A."/>
            <person name="Kelly K.A."/>
            <person name="Pradhan S."/>
            <person name="Jacobsen S.E."/>
        </authorList>
    </citation>
    <scope>FUNCTION</scope>
    <scope>MUTAGENESIS OF CYS-587</scope>
</reference>
<reference key="10">
    <citation type="journal article" date="2011" name="Genetics">
        <title>Genetic evidence that DNA methyltransferase DRM2 has a direct catalytic role in RNA-directed DNA methylation in Arabidopsis thaliana.</title>
        <authorList>
            <person name="Naumann U."/>
            <person name="Daxinger L."/>
            <person name="Kanno T."/>
            <person name="Eun C."/>
            <person name="Long Q."/>
            <person name="Lorkovic Z.J."/>
            <person name="Matzke M."/>
            <person name="Matzke A.J."/>
        </authorList>
    </citation>
    <scope>FUNCTION</scope>
    <scope>MUTAGENESIS OF SER-585</scope>
</reference>
<reference key="11">
    <citation type="journal article" date="2014" name="Plant J.">
        <title>RNA-directed DNA methylation requires stepwise binding of silencing factors to long non-coding RNA.</title>
        <authorList>
            <person name="Boehmdorfer G."/>
            <person name="Rowley M.J."/>
            <person name="Kucinski J."/>
            <person name="Zhu Y."/>
            <person name="Amies I."/>
            <person name="Wierzbicki A.T."/>
        </authorList>
    </citation>
    <scope>FUNCTION</scope>
</reference>
<accession>Q9M548</accession>
<accession>Q9LYJ7</accession>
<accession>Q9LYJ8</accession>
<dbReference type="EC" id="2.1.1.37"/>
<dbReference type="EMBL" id="AF240695">
    <property type="protein sequence ID" value="AAF66129.1"/>
    <property type="molecule type" value="mRNA"/>
</dbReference>
<dbReference type="EMBL" id="AL163792">
    <property type="protein sequence ID" value="CAB87629.1"/>
    <property type="status" value="ALT_SEQ"/>
    <property type="molecule type" value="Genomic_DNA"/>
</dbReference>
<dbReference type="EMBL" id="AL163792">
    <property type="protein sequence ID" value="CAB87630.1"/>
    <property type="status" value="ALT_SEQ"/>
    <property type="molecule type" value="Genomic_DNA"/>
</dbReference>
<dbReference type="EMBL" id="CP002688">
    <property type="protein sequence ID" value="AED92056.1"/>
    <property type="molecule type" value="Genomic_DNA"/>
</dbReference>
<dbReference type="EMBL" id="AK176138">
    <property type="protein sequence ID" value="BAD43901.1"/>
    <property type="molecule type" value="mRNA"/>
</dbReference>
<dbReference type="EMBL" id="AK220953">
    <property type="protein sequence ID" value="BAD94486.1"/>
    <property type="molecule type" value="mRNA"/>
</dbReference>
<dbReference type="EMBL" id="AK229197">
    <property type="protein sequence ID" value="BAF01067.1"/>
    <property type="molecule type" value="mRNA"/>
</dbReference>
<dbReference type="PIR" id="T48635">
    <property type="entry name" value="T48635"/>
</dbReference>
<dbReference type="PIR" id="T48636">
    <property type="entry name" value="T48636"/>
</dbReference>
<dbReference type="RefSeq" id="NP_196966.2">
    <property type="nucleotide sequence ID" value="NM_121466.3"/>
</dbReference>
<dbReference type="PDB" id="7L4C">
    <property type="method" value="X-ray"/>
    <property type="resolution" value="2.11 A"/>
    <property type="chains" value="A=274-626"/>
</dbReference>
<dbReference type="PDB" id="7L4F">
    <property type="method" value="X-ray"/>
    <property type="resolution" value="2.55 A"/>
    <property type="chains" value="A/B=270-626"/>
</dbReference>
<dbReference type="PDB" id="7L4H">
    <property type="method" value="X-ray"/>
    <property type="resolution" value="2.56 A"/>
    <property type="chains" value="A=275-626"/>
</dbReference>
<dbReference type="PDB" id="7L4K">
    <property type="method" value="X-ray"/>
    <property type="resolution" value="2.61 A"/>
    <property type="chains" value="A=270-626"/>
</dbReference>
<dbReference type="PDB" id="7L4M">
    <property type="method" value="X-ray"/>
    <property type="resolution" value="2.81 A"/>
    <property type="chains" value="A/B=270-626"/>
</dbReference>
<dbReference type="PDB" id="7L4N">
    <property type="method" value="X-ray"/>
    <property type="resolution" value="2.25 A"/>
    <property type="chains" value="A=270-626"/>
</dbReference>
<dbReference type="PDB" id="8T1U">
    <property type="method" value="X-ray"/>
    <property type="resolution" value="2.91 A"/>
    <property type="chains" value="A=274-626"/>
</dbReference>
<dbReference type="PDBsum" id="7L4C"/>
<dbReference type="PDBsum" id="7L4F"/>
<dbReference type="PDBsum" id="7L4H"/>
<dbReference type="PDBsum" id="7L4K"/>
<dbReference type="PDBsum" id="7L4M"/>
<dbReference type="PDBsum" id="7L4N"/>
<dbReference type="PDBsum" id="8T1U"/>
<dbReference type="SMR" id="Q9M548"/>
<dbReference type="BioGRID" id="16592">
    <property type="interactions" value="10"/>
</dbReference>
<dbReference type="DIP" id="DIP-59279N"/>
<dbReference type="FunCoup" id="Q9M548">
    <property type="interactions" value="2399"/>
</dbReference>
<dbReference type="IntAct" id="Q9M548">
    <property type="interactions" value="9"/>
</dbReference>
<dbReference type="MINT" id="Q9M548"/>
<dbReference type="STRING" id="3702.Q9M548"/>
<dbReference type="iPTMnet" id="Q9M548"/>
<dbReference type="PaxDb" id="3702-AT5G14620.1"/>
<dbReference type="ProteomicsDB" id="224353"/>
<dbReference type="EnsemblPlants" id="AT5G14620.1">
    <property type="protein sequence ID" value="AT5G14620.1"/>
    <property type="gene ID" value="AT5G14620"/>
</dbReference>
<dbReference type="GeneID" id="831315"/>
<dbReference type="Gramene" id="AT5G14620.1">
    <property type="protein sequence ID" value="AT5G14620.1"/>
    <property type="gene ID" value="AT5G14620"/>
</dbReference>
<dbReference type="KEGG" id="ath:AT5G14620"/>
<dbReference type="Araport" id="AT5G14620"/>
<dbReference type="TAIR" id="AT5G14620">
    <property type="gene designation" value="DRM2"/>
</dbReference>
<dbReference type="eggNOG" id="ENOG502QVZV">
    <property type="taxonomic scope" value="Eukaryota"/>
</dbReference>
<dbReference type="HOGENOM" id="CLU_006805_2_0_1"/>
<dbReference type="InParanoid" id="Q9M548"/>
<dbReference type="OMA" id="RCMQRNQ"/>
<dbReference type="OrthoDB" id="641149at2759"/>
<dbReference type="PhylomeDB" id="Q9M548"/>
<dbReference type="PRO" id="PR:Q9M548"/>
<dbReference type="Proteomes" id="UP000006548">
    <property type="component" value="Chromosome 5"/>
</dbReference>
<dbReference type="ExpressionAtlas" id="Q9M548">
    <property type="expression patterns" value="baseline and differential"/>
</dbReference>
<dbReference type="GO" id="GO:0005654">
    <property type="term" value="C:nucleoplasm"/>
    <property type="evidence" value="ECO:0000314"/>
    <property type="project" value="UniProtKB"/>
</dbReference>
<dbReference type="GO" id="GO:0005634">
    <property type="term" value="C:nucleus"/>
    <property type="evidence" value="ECO:0000250"/>
    <property type="project" value="TAIR"/>
</dbReference>
<dbReference type="GO" id="GO:0003886">
    <property type="term" value="F:DNA (cytosine-5-)-methyltransferase activity"/>
    <property type="evidence" value="ECO:0000318"/>
    <property type="project" value="GO_Central"/>
</dbReference>
<dbReference type="GO" id="GO:0003677">
    <property type="term" value="F:DNA binding"/>
    <property type="evidence" value="ECO:0007669"/>
    <property type="project" value="UniProtKB-KW"/>
</dbReference>
<dbReference type="GO" id="GO:0009008">
    <property type="term" value="F:DNA-methyltransferase activity"/>
    <property type="evidence" value="ECO:0000315"/>
    <property type="project" value="CACAO"/>
</dbReference>
<dbReference type="GO" id="GO:0050832">
    <property type="term" value="P:defense response to fungus"/>
    <property type="evidence" value="ECO:0000316"/>
    <property type="project" value="TAIR"/>
</dbReference>
<dbReference type="GO" id="GO:0006346">
    <property type="term" value="P:DNA methylation-dependent constitutive heterochromatin formation"/>
    <property type="evidence" value="ECO:0000315"/>
    <property type="project" value="UniProtKB"/>
</dbReference>
<dbReference type="GO" id="GO:0032259">
    <property type="term" value="P:methylation"/>
    <property type="evidence" value="ECO:0007669"/>
    <property type="project" value="UniProtKB-KW"/>
</dbReference>
<dbReference type="CDD" id="cd14270">
    <property type="entry name" value="UBA"/>
    <property type="match status" value="1"/>
</dbReference>
<dbReference type="CDD" id="cd14330">
    <property type="entry name" value="UBA_atDRM2_like"/>
    <property type="match status" value="1"/>
</dbReference>
<dbReference type="FunFam" id="1.10.8.10:FF:000228">
    <property type="entry name" value="DNA (cytosine-5)-methyltransferase DRM2"/>
    <property type="match status" value="1"/>
</dbReference>
<dbReference type="FunFam" id="3.40.50.150:FF:000360">
    <property type="entry name" value="DNA (cytosine-5)-methyltransferase DRM2"/>
    <property type="match status" value="1"/>
</dbReference>
<dbReference type="Gene3D" id="1.10.8.10">
    <property type="entry name" value="DNA helicase RuvA subunit, C-terminal domain"/>
    <property type="match status" value="2"/>
</dbReference>
<dbReference type="Gene3D" id="3.40.50.150">
    <property type="entry name" value="Vaccinia Virus protein VP39"/>
    <property type="match status" value="2"/>
</dbReference>
<dbReference type="InterPro" id="IPR001525">
    <property type="entry name" value="C5_MeTfrase"/>
</dbReference>
<dbReference type="InterPro" id="IPR029063">
    <property type="entry name" value="SAM-dependent_MTases_sf"/>
</dbReference>
<dbReference type="InterPro" id="IPR030380">
    <property type="entry name" value="SAM_MeTfrase_DRM"/>
</dbReference>
<dbReference type="InterPro" id="IPR015940">
    <property type="entry name" value="UBA"/>
</dbReference>
<dbReference type="InterPro" id="IPR009060">
    <property type="entry name" value="UBA-like_sf"/>
</dbReference>
<dbReference type="PANTHER" id="PTHR23068:SF25">
    <property type="entry name" value="DNA (CYTOSINE-5)-METHYLTRANSFERASE DRM2"/>
    <property type="match status" value="1"/>
</dbReference>
<dbReference type="PANTHER" id="PTHR23068">
    <property type="entry name" value="DNA CYTOSINE-5- -METHYLTRANSFERASE 3-RELATED"/>
    <property type="match status" value="1"/>
</dbReference>
<dbReference type="Pfam" id="PF00145">
    <property type="entry name" value="DNA_methylase"/>
    <property type="match status" value="1"/>
</dbReference>
<dbReference type="SMART" id="SM00165">
    <property type="entry name" value="UBA"/>
    <property type="match status" value="3"/>
</dbReference>
<dbReference type="SUPFAM" id="SSF53335">
    <property type="entry name" value="S-adenosyl-L-methionine-dependent methyltransferases"/>
    <property type="match status" value="2"/>
</dbReference>
<dbReference type="SUPFAM" id="SSF46934">
    <property type="entry name" value="UBA-like"/>
    <property type="match status" value="3"/>
</dbReference>
<dbReference type="PROSITE" id="PS51680">
    <property type="entry name" value="SAM_MT_DRM"/>
    <property type="match status" value="1"/>
</dbReference>
<dbReference type="PROSITE" id="PS50030">
    <property type="entry name" value="UBA"/>
    <property type="match status" value="2"/>
</dbReference>